<comment type="function">
    <text>Brain peptide responsible for activation of prothoracic glands to produce ecdysone in insects.</text>
</comment>
<comment type="subunit">
    <text>Heterodimer of a B chain and an A chain linked by two disulfide bonds.</text>
</comment>
<comment type="subcellular location">
    <subcellularLocation>
        <location>Secreted</location>
    </subcellularLocation>
</comment>
<comment type="miscellaneous">
    <text>Silk worm has two kinds of PTTH: 4K-PTTH and 22K-PTTH; there are many forms of 4K-PTTH.</text>
</comment>
<comment type="similarity">
    <text evidence="3">Belongs to the insulin family.</text>
</comment>
<gene>
    <name type="primary">BBXB9</name>
</gene>
<feature type="signal peptide" evidence="2">
    <location>
        <begin position="1"/>
        <end position="20"/>
    </location>
</feature>
<feature type="peptide" id="PRO_0000016013" description="Bombyxin B-9 B chain">
    <location>
        <begin position="21"/>
        <end position="46"/>
    </location>
</feature>
<feature type="propeptide" id="PRO_0000016014" description="C peptide like">
    <location>
        <begin position="49"/>
        <end position="64"/>
    </location>
</feature>
<feature type="peptide" id="PRO_0000016015" description="Bombyxin B-9 A chain">
    <location>
        <begin position="67"/>
        <end position="90"/>
    </location>
</feature>
<feature type="disulfide bond" description="Interchain (between B and A chains)" evidence="1">
    <location>
        <begin position="30"/>
        <end position="75"/>
    </location>
</feature>
<feature type="disulfide bond" description="Interchain (between B and A chains)" evidence="1">
    <location>
        <begin position="42"/>
        <end position="88"/>
    </location>
</feature>
<feature type="disulfide bond" evidence="1">
    <location>
        <begin position="74"/>
        <end position="79"/>
    </location>
</feature>
<name>BXB9_BOMMO</name>
<evidence type="ECO:0000250" key="1"/>
<evidence type="ECO:0000255" key="2"/>
<evidence type="ECO:0000305" key="3"/>
<sequence>MMKTAVMFILVVVISLTYSSEEQEVARTYCGRHLANILAYVCFGVEKRGGAQYAPYWQETYLRSRKEPGVVDECCFRPCKLEVLKSYCGV</sequence>
<keyword id="KW-0165">Cleavage on pair of basic residues</keyword>
<keyword id="KW-1015">Disulfide bond</keyword>
<keyword id="KW-0372">Hormone</keyword>
<keyword id="KW-1185">Reference proteome</keyword>
<keyword id="KW-0964">Secreted</keyword>
<keyword id="KW-0732">Signal</keyword>
<protein>
    <recommendedName>
        <fullName>Bombyxin B-9</fullName>
        <shortName>BBX-B9</shortName>
    </recommendedName>
    <alternativeName>
        <fullName>4K-prothoracicotropic hormone</fullName>
        <shortName>4K-PTTH</shortName>
    </alternativeName>
    <component>
        <recommendedName>
            <fullName>Bombyxin B-9 B chain</fullName>
        </recommendedName>
    </component>
    <component>
        <recommendedName>
            <fullName>Bombyxin B-9 A chain</fullName>
        </recommendedName>
    </component>
</protein>
<reference key="1">
    <citation type="journal article" date="1996" name="J. Mol. Biol.">
        <title>Multiple gene copies for bombyxin, an insulin-related peptide of the silkmoth Bombyx mori: structural signs for gene rearrangement and duplication responsible for generation of multiple molecular forms of bombyxin.</title>
        <authorList>
            <person name="Kondo H."/>
            <person name="Ino M."/>
            <person name="Suzuki A."/>
            <person name="Ishizaki H."/>
            <person name="Iwami M."/>
        </authorList>
    </citation>
    <scope>NUCLEOTIDE SEQUENCE [GENOMIC DNA]</scope>
    <source>
        <strain>Kinshu</strain>
    </source>
</reference>
<organism>
    <name type="scientific">Bombyx mori</name>
    <name type="common">Silk moth</name>
    <dbReference type="NCBI Taxonomy" id="7091"/>
    <lineage>
        <taxon>Eukaryota</taxon>
        <taxon>Metazoa</taxon>
        <taxon>Ecdysozoa</taxon>
        <taxon>Arthropoda</taxon>
        <taxon>Hexapoda</taxon>
        <taxon>Insecta</taxon>
        <taxon>Pterygota</taxon>
        <taxon>Neoptera</taxon>
        <taxon>Endopterygota</taxon>
        <taxon>Lepidoptera</taxon>
        <taxon>Glossata</taxon>
        <taxon>Ditrysia</taxon>
        <taxon>Bombycoidea</taxon>
        <taxon>Bombycidae</taxon>
        <taxon>Bombycinae</taxon>
        <taxon>Bombyx</taxon>
    </lineage>
</organism>
<accession>P26743</accession>
<dbReference type="EMBL" id="D00785">
    <property type="protein sequence ID" value="BAA00681.1"/>
    <property type="molecule type" value="Genomic_DNA"/>
</dbReference>
<dbReference type="PIR" id="S69495">
    <property type="entry name" value="S69495"/>
</dbReference>
<dbReference type="InParanoid" id="P26743"/>
<dbReference type="Proteomes" id="UP000005204">
    <property type="component" value="Unassembled WGS sequence"/>
</dbReference>
<dbReference type="GO" id="GO:0005615">
    <property type="term" value="C:extracellular space"/>
    <property type="evidence" value="ECO:0007669"/>
    <property type="project" value="InterPro"/>
</dbReference>
<dbReference type="GO" id="GO:0008083">
    <property type="term" value="F:growth factor activity"/>
    <property type="evidence" value="ECO:0007669"/>
    <property type="project" value="InterPro"/>
</dbReference>
<dbReference type="GO" id="GO:0005179">
    <property type="term" value="F:hormone activity"/>
    <property type="evidence" value="ECO:0007669"/>
    <property type="project" value="UniProtKB-KW"/>
</dbReference>
<dbReference type="GO" id="GO:0005159">
    <property type="term" value="F:insulin-like growth factor receptor binding"/>
    <property type="evidence" value="ECO:0007669"/>
    <property type="project" value="TreeGrafter"/>
</dbReference>
<dbReference type="GO" id="GO:0008283">
    <property type="term" value="P:cell population proliferation"/>
    <property type="evidence" value="ECO:0007669"/>
    <property type="project" value="TreeGrafter"/>
</dbReference>
<dbReference type="GO" id="GO:0048009">
    <property type="term" value="P:insulin-like growth factor receptor signaling pathway"/>
    <property type="evidence" value="ECO:0007669"/>
    <property type="project" value="TreeGrafter"/>
</dbReference>
<dbReference type="GO" id="GO:0043066">
    <property type="term" value="P:negative regulation of apoptotic process"/>
    <property type="evidence" value="ECO:0007669"/>
    <property type="project" value="TreeGrafter"/>
</dbReference>
<dbReference type="GO" id="GO:0008284">
    <property type="term" value="P:positive regulation of cell population proliferation"/>
    <property type="evidence" value="ECO:0007669"/>
    <property type="project" value="TreeGrafter"/>
</dbReference>
<dbReference type="GO" id="GO:0051897">
    <property type="term" value="P:positive regulation of phosphatidylinositol 3-kinase/protein kinase B signal transduction"/>
    <property type="evidence" value="ECO:0007669"/>
    <property type="project" value="TreeGrafter"/>
</dbReference>
<dbReference type="CDD" id="cd04366">
    <property type="entry name" value="IlGF_insulin_bombyxin_like"/>
    <property type="match status" value="1"/>
</dbReference>
<dbReference type="Gene3D" id="1.10.100.10">
    <property type="entry name" value="Insulin-like"/>
    <property type="match status" value="1"/>
</dbReference>
<dbReference type="InterPro" id="IPR017097">
    <property type="entry name" value="Bombyxin"/>
</dbReference>
<dbReference type="InterPro" id="IPR027285">
    <property type="entry name" value="Bombyxin_B"/>
</dbReference>
<dbReference type="InterPro" id="IPR016179">
    <property type="entry name" value="Insulin-like"/>
</dbReference>
<dbReference type="InterPro" id="IPR036438">
    <property type="entry name" value="Insulin-like_sf"/>
</dbReference>
<dbReference type="InterPro" id="IPR022353">
    <property type="entry name" value="Insulin_CS"/>
</dbReference>
<dbReference type="InterPro" id="IPR022352">
    <property type="entry name" value="Insulin_family"/>
</dbReference>
<dbReference type="PANTHER" id="PTHR46845">
    <property type="entry name" value="INSULIN-LIKE GROWTH FACTOR I"/>
    <property type="match status" value="1"/>
</dbReference>
<dbReference type="PANTHER" id="PTHR46845:SF1">
    <property type="entry name" value="INSULIN-LIKE GROWTH FACTOR I"/>
    <property type="match status" value="1"/>
</dbReference>
<dbReference type="Pfam" id="PF00049">
    <property type="entry name" value="Insulin"/>
    <property type="match status" value="2"/>
</dbReference>
<dbReference type="PIRSF" id="PIRSF037038">
    <property type="entry name" value="Bombyxin"/>
    <property type="match status" value="1"/>
</dbReference>
<dbReference type="PIRSF" id="PIRSF500313">
    <property type="entry name" value="Bombyxin_B"/>
    <property type="match status" value="1"/>
</dbReference>
<dbReference type="PRINTS" id="PR02003">
    <property type="entry name" value="BOMBYXIN"/>
</dbReference>
<dbReference type="PRINTS" id="PR00276">
    <property type="entry name" value="INSULINFAMLY"/>
</dbReference>
<dbReference type="SMART" id="SM00078">
    <property type="entry name" value="IlGF"/>
    <property type="match status" value="1"/>
</dbReference>
<dbReference type="SUPFAM" id="SSF56994">
    <property type="entry name" value="Insulin-like"/>
    <property type="match status" value="1"/>
</dbReference>
<dbReference type="PROSITE" id="PS00262">
    <property type="entry name" value="INSULIN"/>
    <property type="match status" value="1"/>
</dbReference>
<proteinExistence type="inferred from homology"/>